<organism>
    <name type="scientific">Staphylococcus aureus (strain MRSA252)</name>
    <dbReference type="NCBI Taxonomy" id="282458"/>
    <lineage>
        <taxon>Bacteria</taxon>
        <taxon>Bacillati</taxon>
        <taxon>Bacillota</taxon>
        <taxon>Bacilli</taxon>
        <taxon>Bacillales</taxon>
        <taxon>Staphylococcaceae</taxon>
        <taxon>Staphylococcus</taxon>
    </lineage>
</organism>
<gene>
    <name type="ordered locus">SAR2570</name>
</gene>
<comment type="subcellular location">
    <subcellularLocation>
        <location evidence="2">Cell membrane</location>
        <topology evidence="2">Single-pass membrane protein</topology>
    </subcellularLocation>
</comment>
<comment type="similarity">
    <text evidence="2">Belongs to the staphylococcal tandem lipoprotein family.</text>
</comment>
<keyword id="KW-1003">Cell membrane</keyword>
<keyword id="KW-0472">Membrane</keyword>
<keyword id="KW-0812">Transmembrane</keyword>
<keyword id="KW-1133">Transmembrane helix</keyword>
<proteinExistence type="inferred from homology"/>
<protein>
    <recommendedName>
        <fullName>Uncharacterized protein SAR2570</fullName>
    </recommendedName>
</protein>
<name>Y2570_STAAR</name>
<accession>Q6GDV3</accession>
<sequence>MIQSKKLTLGICLVLLIILIVGYVIMTKTNGRNAQIKDTFNQTLKLYPTKNLDGFYDKEGFRDQEFKKGDKGTWIVNSEMVIEPKGKDMETRGMVLYINRNTRTTKGYYFISEMTDDSNGRPKDDEKRYPVKMEHNKIIPTKPLPNDKLKKEIENLKFFVQYGNFKDINDYKDGDISYNPNVPSYSAKYQLNNDDYNVQQLRKRYDIPTKQAPKLLLKGDGDLKGSSVGSKNIEFTFVENKEENIYFTDSVQYTPSEDTRYESN</sequence>
<dbReference type="EMBL" id="BX571856">
    <property type="protein sequence ID" value="CAG41551.1"/>
    <property type="molecule type" value="Genomic_DNA"/>
</dbReference>
<dbReference type="RefSeq" id="WP_000616191.1">
    <property type="nucleotide sequence ID" value="NC_002952.2"/>
</dbReference>
<dbReference type="SMR" id="Q6GDV3"/>
<dbReference type="KEGG" id="sar:SAR2570"/>
<dbReference type="HOGENOM" id="CLU_071589_0_1_9"/>
<dbReference type="Proteomes" id="UP000000596">
    <property type="component" value="Chromosome"/>
</dbReference>
<dbReference type="GO" id="GO:0005886">
    <property type="term" value="C:plasma membrane"/>
    <property type="evidence" value="ECO:0007669"/>
    <property type="project" value="UniProtKB-SubCell"/>
</dbReference>
<dbReference type="Gene3D" id="2.50.20.40">
    <property type="match status" value="1"/>
</dbReference>
<dbReference type="InterPro" id="IPR007595">
    <property type="entry name" value="Csa"/>
</dbReference>
<dbReference type="InterPro" id="IPR038641">
    <property type="entry name" value="Csa_sf"/>
</dbReference>
<dbReference type="NCBIfam" id="TIGR01742">
    <property type="entry name" value="SA_tandem_lipo"/>
    <property type="match status" value="1"/>
</dbReference>
<dbReference type="Pfam" id="PF04507">
    <property type="entry name" value="DUF576"/>
    <property type="match status" value="1"/>
</dbReference>
<reference key="1">
    <citation type="journal article" date="2004" name="Proc. Natl. Acad. Sci. U.S.A.">
        <title>Complete genomes of two clinical Staphylococcus aureus strains: evidence for the rapid evolution of virulence and drug resistance.</title>
        <authorList>
            <person name="Holden M.T.G."/>
            <person name="Feil E.J."/>
            <person name="Lindsay J.A."/>
            <person name="Peacock S.J."/>
            <person name="Day N.P.J."/>
            <person name="Enright M.C."/>
            <person name="Foster T.J."/>
            <person name="Moore C.E."/>
            <person name="Hurst L."/>
            <person name="Atkin R."/>
            <person name="Barron A."/>
            <person name="Bason N."/>
            <person name="Bentley S.D."/>
            <person name="Chillingworth C."/>
            <person name="Chillingworth T."/>
            <person name="Churcher C."/>
            <person name="Clark L."/>
            <person name="Corton C."/>
            <person name="Cronin A."/>
            <person name="Doggett J."/>
            <person name="Dowd L."/>
            <person name="Feltwell T."/>
            <person name="Hance Z."/>
            <person name="Harris B."/>
            <person name="Hauser H."/>
            <person name="Holroyd S."/>
            <person name="Jagels K."/>
            <person name="James K.D."/>
            <person name="Lennard N."/>
            <person name="Line A."/>
            <person name="Mayes R."/>
            <person name="Moule S."/>
            <person name="Mungall K."/>
            <person name="Ormond D."/>
            <person name="Quail M.A."/>
            <person name="Rabbinowitsch E."/>
            <person name="Rutherford K.M."/>
            <person name="Sanders M."/>
            <person name="Sharp S."/>
            <person name="Simmonds M."/>
            <person name="Stevens K."/>
            <person name="Whitehead S."/>
            <person name="Barrell B.G."/>
            <person name="Spratt B.G."/>
            <person name="Parkhill J."/>
        </authorList>
    </citation>
    <scope>NUCLEOTIDE SEQUENCE [LARGE SCALE GENOMIC DNA]</scope>
    <source>
        <strain>MRSA252</strain>
    </source>
</reference>
<evidence type="ECO:0000255" key="1"/>
<evidence type="ECO:0000305" key="2"/>
<feature type="chain" id="PRO_0000282152" description="Uncharacterized protein SAR2570">
    <location>
        <begin position="1"/>
        <end position="264"/>
    </location>
</feature>
<feature type="transmembrane region" description="Helical" evidence="1">
    <location>
        <begin position="7"/>
        <end position="27"/>
    </location>
</feature>